<accession>B1LDY9</accession>
<organism>
    <name type="scientific">Escherichia coli (strain SMS-3-5 / SECEC)</name>
    <dbReference type="NCBI Taxonomy" id="439855"/>
    <lineage>
        <taxon>Bacteria</taxon>
        <taxon>Pseudomonadati</taxon>
        <taxon>Pseudomonadota</taxon>
        <taxon>Gammaproteobacteria</taxon>
        <taxon>Enterobacterales</taxon>
        <taxon>Enterobacteriaceae</taxon>
        <taxon>Escherichia</taxon>
    </lineage>
</organism>
<evidence type="ECO:0000255" key="1">
    <source>
        <dbReference type="HAMAP-Rule" id="MF_01591"/>
    </source>
</evidence>
<proteinExistence type="inferred from homology"/>
<protein>
    <recommendedName>
        <fullName evidence="1">Protein Ves</fullName>
    </recommendedName>
</protein>
<feature type="chain" id="PRO_1000201500" description="Protein Ves">
    <location>
        <begin position="1"/>
        <end position="191"/>
    </location>
</feature>
<sequence>MEYFDMRKMSVNLWRNAAGETREICTFPPAKRDFYWRASITSIAANGEFSLFPGMERIVTLLEGGEMFLESADRFNHTLKPLQPFAFAADQVVKAKLTAGQMSMDFNIMTRLDVCKAKVRIAERTFTTFGSRGGVVFVINGAWQLGDKLLTTDQGACWFDGRHTLRLLQPQGKLLFSEINWLAGHSPDQVQ</sequence>
<reference key="1">
    <citation type="journal article" date="2008" name="J. Bacteriol.">
        <title>Insights into the environmental resistance gene pool from the genome sequence of the multidrug-resistant environmental isolate Escherichia coli SMS-3-5.</title>
        <authorList>
            <person name="Fricke W.F."/>
            <person name="Wright M.S."/>
            <person name="Lindell A.H."/>
            <person name="Harkins D.M."/>
            <person name="Baker-Austin C."/>
            <person name="Ravel J."/>
            <person name="Stepanauskas R."/>
        </authorList>
    </citation>
    <scope>NUCLEOTIDE SEQUENCE [LARGE SCALE GENOMIC DNA]</scope>
    <source>
        <strain>SMS-3-5 / SECEC</strain>
    </source>
</reference>
<name>VES_ECOSM</name>
<comment type="similarity">
    <text evidence="1">Belongs to the Ves family.</text>
</comment>
<dbReference type="EMBL" id="CP000970">
    <property type="protein sequence ID" value="ACB19298.1"/>
    <property type="molecule type" value="Genomic_DNA"/>
</dbReference>
<dbReference type="RefSeq" id="WP_012311928.1">
    <property type="nucleotide sequence ID" value="NC_010498.1"/>
</dbReference>
<dbReference type="SMR" id="B1LDY9"/>
<dbReference type="KEGG" id="ecm:EcSMS35_1450"/>
<dbReference type="HOGENOM" id="CLU_090931_5_0_6"/>
<dbReference type="Proteomes" id="UP000007011">
    <property type="component" value="Chromosome"/>
</dbReference>
<dbReference type="CDD" id="cd20293">
    <property type="entry name" value="cupin_HutD_N"/>
    <property type="match status" value="1"/>
</dbReference>
<dbReference type="Gene3D" id="2.60.120.10">
    <property type="entry name" value="Jelly Rolls"/>
    <property type="match status" value="1"/>
</dbReference>
<dbReference type="HAMAP" id="MF_01591">
    <property type="entry name" value="Ves"/>
    <property type="match status" value="1"/>
</dbReference>
<dbReference type="InterPro" id="IPR014710">
    <property type="entry name" value="RmlC-like_jellyroll"/>
</dbReference>
<dbReference type="InterPro" id="IPR011051">
    <property type="entry name" value="RmlC_Cupin_sf"/>
</dbReference>
<dbReference type="InterPro" id="IPR010282">
    <property type="entry name" value="Uncharacterised_HutD/Ves"/>
</dbReference>
<dbReference type="InterPro" id="IPR023482">
    <property type="entry name" value="Uncharacterised_Ves"/>
</dbReference>
<dbReference type="NCBIfam" id="NF008488">
    <property type="entry name" value="PRK11396.1"/>
    <property type="match status" value="1"/>
</dbReference>
<dbReference type="PANTHER" id="PTHR37943">
    <property type="entry name" value="PROTEIN VES"/>
    <property type="match status" value="1"/>
</dbReference>
<dbReference type="PANTHER" id="PTHR37943:SF1">
    <property type="entry name" value="PROTEIN VES"/>
    <property type="match status" value="1"/>
</dbReference>
<dbReference type="Pfam" id="PF05962">
    <property type="entry name" value="HutD"/>
    <property type="match status" value="1"/>
</dbReference>
<dbReference type="SUPFAM" id="SSF51182">
    <property type="entry name" value="RmlC-like cupins"/>
    <property type="match status" value="1"/>
</dbReference>
<gene>
    <name evidence="1" type="primary">ves</name>
    <name type="ordered locus">EcSMS35_1450</name>
</gene>